<name>CH10_HOLOB</name>
<proteinExistence type="inferred from homology"/>
<dbReference type="EMBL" id="D89970">
    <property type="protein sequence ID" value="BAA14045.1"/>
    <property type="molecule type" value="Genomic_DNA"/>
</dbReference>
<dbReference type="SMR" id="P94819"/>
<dbReference type="GO" id="GO:0005737">
    <property type="term" value="C:cytoplasm"/>
    <property type="evidence" value="ECO:0007669"/>
    <property type="project" value="UniProtKB-SubCell"/>
</dbReference>
<dbReference type="GO" id="GO:0005524">
    <property type="term" value="F:ATP binding"/>
    <property type="evidence" value="ECO:0007669"/>
    <property type="project" value="InterPro"/>
</dbReference>
<dbReference type="GO" id="GO:0046872">
    <property type="term" value="F:metal ion binding"/>
    <property type="evidence" value="ECO:0007669"/>
    <property type="project" value="TreeGrafter"/>
</dbReference>
<dbReference type="GO" id="GO:0044183">
    <property type="term" value="F:protein folding chaperone"/>
    <property type="evidence" value="ECO:0007669"/>
    <property type="project" value="InterPro"/>
</dbReference>
<dbReference type="GO" id="GO:0051087">
    <property type="term" value="F:protein-folding chaperone binding"/>
    <property type="evidence" value="ECO:0007669"/>
    <property type="project" value="TreeGrafter"/>
</dbReference>
<dbReference type="GO" id="GO:0051082">
    <property type="term" value="F:unfolded protein binding"/>
    <property type="evidence" value="ECO:0007669"/>
    <property type="project" value="TreeGrafter"/>
</dbReference>
<dbReference type="GO" id="GO:0051085">
    <property type="term" value="P:chaperone cofactor-dependent protein refolding"/>
    <property type="evidence" value="ECO:0007669"/>
    <property type="project" value="TreeGrafter"/>
</dbReference>
<dbReference type="CDD" id="cd00320">
    <property type="entry name" value="cpn10"/>
    <property type="match status" value="1"/>
</dbReference>
<dbReference type="FunFam" id="2.30.33.40:FF:000001">
    <property type="entry name" value="10 kDa chaperonin"/>
    <property type="match status" value="1"/>
</dbReference>
<dbReference type="Gene3D" id="2.30.33.40">
    <property type="entry name" value="GroES chaperonin"/>
    <property type="match status" value="1"/>
</dbReference>
<dbReference type="HAMAP" id="MF_00580">
    <property type="entry name" value="CH10"/>
    <property type="match status" value="1"/>
</dbReference>
<dbReference type="InterPro" id="IPR020818">
    <property type="entry name" value="Chaperonin_GroES"/>
</dbReference>
<dbReference type="InterPro" id="IPR037124">
    <property type="entry name" value="Chaperonin_GroES_sf"/>
</dbReference>
<dbReference type="InterPro" id="IPR018369">
    <property type="entry name" value="Chaprnonin_Cpn10_CS"/>
</dbReference>
<dbReference type="InterPro" id="IPR011032">
    <property type="entry name" value="GroES-like_sf"/>
</dbReference>
<dbReference type="NCBIfam" id="NF001527">
    <property type="entry name" value="PRK00364.1-2"/>
    <property type="match status" value="1"/>
</dbReference>
<dbReference type="NCBIfam" id="NF001529">
    <property type="entry name" value="PRK00364.1-5"/>
    <property type="match status" value="1"/>
</dbReference>
<dbReference type="NCBIfam" id="NF001531">
    <property type="entry name" value="PRK00364.2-2"/>
    <property type="match status" value="1"/>
</dbReference>
<dbReference type="NCBIfam" id="NF001533">
    <property type="entry name" value="PRK00364.2-4"/>
    <property type="match status" value="1"/>
</dbReference>
<dbReference type="NCBIfam" id="NF001534">
    <property type="entry name" value="PRK00364.2-5"/>
    <property type="match status" value="1"/>
</dbReference>
<dbReference type="PANTHER" id="PTHR10772">
    <property type="entry name" value="10 KDA HEAT SHOCK PROTEIN"/>
    <property type="match status" value="1"/>
</dbReference>
<dbReference type="PANTHER" id="PTHR10772:SF63">
    <property type="entry name" value="20 KDA CHAPERONIN, CHLOROPLASTIC"/>
    <property type="match status" value="1"/>
</dbReference>
<dbReference type="Pfam" id="PF00166">
    <property type="entry name" value="Cpn10"/>
    <property type="match status" value="1"/>
</dbReference>
<dbReference type="PRINTS" id="PR00297">
    <property type="entry name" value="CHAPERONIN10"/>
</dbReference>
<dbReference type="SMART" id="SM00883">
    <property type="entry name" value="Cpn10"/>
    <property type="match status" value="1"/>
</dbReference>
<dbReference type="SUPFAM" id="SSF50129">
    <property type="entry name" value="GroES-like"/>
    <property type="match status" value="1"/>
</dbReference>
<dbReference type="PROSITE" id="PS00681">
    <property type="entry name" value="CHAPERONINS_CPN10"/>
    <property type="match status" value="1"/>
</dbReference>
<organism>
    <name type="scientific">Holospora obtusa</name>
    <dbReference type="NCBI Taxonomy" id="49893"/>
    <lineage>
        <taxon>Bacteria</taxon>
        <taxon>Pseudomonadati</taxon>
        <taxon>Pseudomonadota</taxon>
        <taxon>Alphaproteobacteria</taxon>
        <taxon>Holosporales</taxon>
        <taxon>Holosporaceae</taxon>
        <taxon>Holospora</taxon>
    </lineage>
</organism>
<protein>
    <recommendedName>
        <fullName evidence="1">Co-chaperonin GroES</fullName>
    </recommendedName>
    <alternativeName>
        <fullName evidence="1">10 kDa chaperonin</fullName>
    </alternativeName>
    <alternativeName>
        <fullName evidence="1">Chaperonin-10</fullName>
        <shortName evidence="1">Cpn10</shortName>
    </alternativeName>
</protein>
<accession>P94819</accession>
<sequence length="96" mass="10356">MTKFKPLGDRILVKRVEAEERTSGGIVIPDTAKEKPIEGTVIAVGPGARDPQGNLIALEVKQGDRVLFGKWSGTEVKLSGEDYIVMKESDVFGTIA</sequence>
<keyword id="KW-0143">Chaperone</keyword>
<keyword id="KW-0963">Cytoplasm</keyword>
<gene>
    <name evidence="1" type="primary">groES</name>
    <name evidence="1" type="synonym">groS</name>
    <name type="synonym">mopB</name>
</gene>
<comment type="function">
    <text evidence="1">Together with the chaperonin GroEL, plays an essential role in assisting protein folding. The GroEL-GroES system forms a nano-cage that allows encapsulation of the non-native substrate proteins and provides a physical environment optimized to promote and accelerate protein folding. GroES binds to the apical surface of the GroEL ring, thereby capping the opening of the GroEL channel.</text>
</comment>
<comment type="subunit">
    <text evidence="1">Heptamer of 7 subunits arranged in a ring. Interacts with the chaperonin GroEL.</text>
</comment>
<comment type="subcellular location">
    <subcellularLocation>
        <location evidence="1">Cytoplasm</location>
    </subcellularLocation>
</comment>
<comment type="similarity">
    <text evidence="1 2">Belongs to the GroES chaperonin family.</text>
</comment>
<feature type="chain" id="PRO_0000174766" description="Co-chaperonin GroES">
    <location>
        <begin position="1"/>
        <end position="96"/>
    </location>
</feature>
<reference key="1">
    <citation type="journal article" date="1998" name="J. Eukaryot. Microbiol.">
        <title>Structure and expression of a GroE-homologous operon of a macronucleus-specific symbiont Holospora obtusa of the ciliate Paramecium caudatum.</title>
        <authorList>
            <person name="Dohra H."/>
            <person name="Fujishima M."/>
            <person name="Ishikawa H."/>
        </authorList>
    </citation>
    <scope>NUCLEOTIDE SEQUENCE [GENOMIC DNA]</scope>
</reference>
<evidence type="ECO:0000255" key="1">
    <source>
        <dbReference type="HAMAP-Rule" id="MF_00580"/>
    </source>
</evidence>
<evidence type="ECO:0000305" key="2"/>